<gene>
    <name type="ordered locus">MJ0132</name>
</gene>
<protein>
    <recommendedName>
        <fullName>Type I restriction enzyme MjaVII methylase subunit</fullName>
        <shortName>M protein</shortName>
        <ecNumber evidence="1">2.1.1.72</ecNumber>
    </recommendedName>
    <alternativeName>
        <fullName evidence="3">Type I methyltransferase M.MjaVII</fullName>
        <shortName evidence="3">M.MjaVII</shortName>
    </alternativeName>
</protein>
<proteinExistence type="inferred from homology"/>
<evidence type="ECO:0000250" key="1">
    <source>
        <dbReference type="UniProtKB" id="P08957"/>
    </source>
</evidence>
<evidence type="ECO:0000250" key="2">
    <source>
        <dbReference type="UniProtKB" id="Q89Z59"/>
    </source>
</evidence>
<evidence type="ECO:0000303" key="3">
    <source>
    </source>
</evidence>
<evidence type="ECO:0000305" key="4"/>
<name>T1M1_METJA</name>
<organism>
    <name type="scientific">Methanocaldococcus jannaschii (strain ATCC 43067 / DSM 2661 / JAL-1 / JCM 10045 / NBRC 100440)</name>
    <name type="common">Methanococcus jannaschii</name>
    <dbReference type="NCBI Taxonomy" id="243232"/>
    <lineage>
        <taxon>Archaea</taxon>
        <taxon>Methanobacteriati</taxon>
        <taxon>Methanobacteriota</taxon>
        <taxon>Methanomada group</taxon>
        <taxon>Methanococci</taxon>
        <taxon>Methanococcales</taxon>
        <taxon>Methanocaldococcaceae</taxon>
        <taxon>Methanocaldococcus</taxon>
    </lineage>
</organism>
<reference key="1">
    <citation type="journal article" date="1996" name="Science">
        <title>Complete genome sequence of the methanogenic archaeon, Methanococcus jannaschii.</title>
        <authorList>
            <person name="Bult C.J."/>
            <person name="White O."/>
            <person name="Olsen G.J."/>
            <person name="Zhou L."/>
            <person name="Fleischmann R.D."/>
            <person name="Sutton G.G."/>
            <person name="Blake J.A."/>
            <person name="FitzGerald L.M."/>
            <person name="Clayton R.A."/>
            <person name="Gocayne J.D."/>
            <person name="Kerlavage A.R."/>
            <person name="Dougherty B.A."/>
            <person name="Tomb J.-F."/>
            <person name="Adams M.D."/>
            <person name="Reich C.I."/>
            <person name="Overbeek R."/>
            <person name="Kirkness E.F."/>
            <person name="Weinstock K.G."/>
            <person name="Merrick J.M."/>
            <person name="Glodek A."/>
            <person name="Scott J.L."/>
            <person name="Geoghagen N.S.M."/>
            <person name="Weidman J.F."/>
            <person name="Fuhrmann J.L."/>
            <person name="Nguyen D."/>
            <person name="Utterback T.R."/>
            <person name="Kelley J.M."/>
            <person name="Peterson J.D."/>
            <person name="Sadow P.W."/>
            <person name="Hanna M.C."/>
            <person name="Cotton M.D."/>
            <person name="Roberts K.M."/>
            <person name="Hurst M.A."/>
            <person name="Kaine B.P."/>
            <person name="Borodovsky M."/>
            <person name="Klenk H.-P."/>
            <person name="Fraser C.M."/>
            <person name="Smith H.O."/>
            <person name="Woese C.R."/>
            <person name="Venter J.C."/>
        </authorList>
    </citation>
    <scope>NUCLEOTIDE SEQUENCE [LARGE SCALE GENOMIC DNA]</scope>
    <source>
        <strain>ATCC 43067 / DSM 2661 / JAL-1 / JCM 10045 / NBRC 100440</strain>
    </source>
</reference>
<reference key="2">
    <citation type="journal article" date="2003" name="Nucleic Acids Res.">
        <title>A nomenclature for restriction enzymes, DNA methyltransferases, homing endonucleases and their genes.</title>
        <authorList>
            <person name="Roberts R.J."/>
            <person name="Belfort M."/>
            <person name="Bestor T."/>
            <person name="Bhagwat A.S."/>
            <person name="Bickle T.A."/>
            <person name="Bitinaite J."/>
            <person name="Blumenthal R.M."/>
            <person name="Degtyarev S.K."/>
            <person name="Dryden D.T."/>
            <person name="Dybvig K."/>
            <person name="Firman K."/>
            <person name="Gromova E.S."/>
            <person name="Gumport R.I."/>
            <person name="Halford S.E."/>
            <person name="Hattman S."/>
            <person name="Heitman J."/>
            <person name="Hornby D.P."/>
            <person name="Janulaitis A."/>
            <person name="Jeltsch A."/>
            <person name="Josephsen J."/>
            <person name="Kiss A."/>
            <person name="Klaenhammer T.R."/>
            <person name="Kobayashi I."/>
            <person name="Kong H."/>
            <person name="Krueger D.H."/>
            <person name="Lacks S."/>
            <person name="Marinus M.G."/>
            <person name="Miyahara M."/>
            <person name="Morgan R.D."/>
            <person name="Murray N.E."/>
            <person name="Nagaraja V."/>
            <person name="Piekarowicz A."/>
            <person name="Pingoud A."/>
            <person name="Raleigh E."/>
            <person name="Rao D.N."/>
            <person name="Reich N."/>
            <person name="Repin V.E."/>
            <person name="Selker E.U."/>
            <person name="Shaw P.C."/>
            <person name="Stein D.C."/>
            <person name="Stoddard B.L."/>
            <person name="Szybalski W."/>
            <person name="Trautner T.A."/>
            <person name="Van Etten J.L."/>
            <person name="Vitor J.M."/>
            <person name="Wilson G.G."/>
            <person name="Xu S.Y."/>
        </authorList>
    </citation>
    <scope>NOMENCLATURE</scope>
    <scope>SUBTYPE</scope>
</reference>
<feature type="chain" id="PRO_0000106710" description="Type I restriction enzyme MjaVII methylase subunit">
    <location>
        <begin position="1"/>
        <end position="577"/>
    </location>
</feature>
<feature type="binding site" evidence="2">
    <location>
        <begin position="251"/>
        <end position="256"/>
    </location>
    <ligand>
        <name>S-adenosyl-L-methionine</name>
        <dbReference type="ChEBI" id="CHEBI:59789"/>
    </ligand>
</feature>
<feature type="binding site" evidence="2">
    <location>
        <begin position="281"/>
        <end position="283"/>
    </location>
    <ligand>
        <name>S-adenosyl-L-methionine</name>
        <dbReference type="ChEBI" id="CHEBI:59789"/>
    </ligand>
</feature>
<feature type="binding site" evidence="4">
    <location>
        <position position="306"/>
    </location>
    <ligand>
        <name>S-adenosyl-L-methionine</name>
        <dbReference type="ChEBI" id="CHEBI:59789"/>
    </ligand>
</feature>
<feature type="binding site" evidence="2">
    <location>
        <begin position="335"/>
        <end position="336"/>
    </location>
    <ligand>
        <name>S-adenosyl-L-methionine</name>
        <dbReference type="ChEBI" id="CHEBI:59789"/>
    </ligand>
</feature>
<sequence>MLLEFADLDNWVKKRGSILFKKFKYEPFTLEEADKALKEEGIEAENTKELLSILRRKEIIIAKKDPKDKRKRLYQFVKSAKKPTKDNLIRNLKYCADLIRTSVDYKVLLVFLFYKAISDKYLALVEKFVSEGYSKTQAYLMANRSYLTLYDEDEGKLYVWHEIVKSRETIMELANALNKIANLNDNLKDLSKLVEVLGLIGFINEDNMHILEELVRVYNEMDFSEIDYDAIGDAYQWILSYFAPQKCKEGEVYTPVEVVRLIVNLLDIEKDSEVLDPACGSGTMLIESYRYVKDNYGGEIYLYGQERNEIMAILAKLNLILHGVDSEEYEIYIGDSLKNPKIWRGEVDYTIANPPWNLDGYNEDVLKENPDVRRIYNTFVRGGYPPKQSADWAWVQLMLYFARKKVGIVLDSGALFRGGKEKKIRKEIVEKDLIEAIILLPEKLFYNVTAPGIVMILNKNKPEERKGKILFINASLEFEKHPEVRRLNRLGEENIDKIVDVYENWEDIEGFSRVVDLEEIRKNDYNLNVSLYVFPVEEKEDIDLRKELEEFKEIEKKEKEVLDEVIGYVEGILRAGS</sequence>
<dbReference type="EC" id="2.1.1.72" evidence="1"/>
<dbReference type="EMBL" id="L77117">
    <property type="protein sequence ID" value="AAB98113.1"/>
    <property type="status" value="ALT_FRAME"/>
    <property type="molecule type" value="Genomic_DNA"/>
</dbReference>
<dbReference type="PIR" id="D64316">
    <property type="entry name" value="D64316"/>
</dbReference>
<dbReference type="SMR" id="Q57596"/>
<dbReference type="STRING" id="243232.MJ_0132"/>
<dbReference type="REBASE" id="3902">
    <property type="entry name" value="M.MjaVII"/>
</dbReference>
<dbReference type="PaxDb" id="243232-MJ_0132"/>
<dbReference type="EnsemblBacteria" id="AAB98113">
    <property type="protein sequence ID" value="AAB98113"/>
    <property type="gene ID" value="MJ_0132"/>
</dbReference>
<dbReference type="KEGG" id="mja:MJ_0132"/>
<dbReference type="eggNOG" id="arCOG02632">
    <property type="taxonomic scope" value="Archaea"/>
</dbReference>
<dbReference type="HOGENOM" id="CLU_013049_1_0_2"/>
<dbReference type="InParanoid" id="Q57596"/>
<dbReference type="PhylomeDB" id="Q57596"/>
<dbReference type="Proteomes" id="UP000000805">
    <property type="component" value="Chromosome"/>
</dbReference>
<dbReference type="GO" id="GO:0003677">
    <property type="term" value="F:DNA binding"/>
    <property type="evidence" value="ECO:0007669"/>
    <property type="project" value="UniProtKB-KW"/>
</dbReference>
<dbReference type="GO" id="GO:0008170">
    <property type="term" value="F:N-methyltransferase activity"/>
    <property type="evidence" value="ECO:0007669"/>
    <property type="project" value="InterPro"/>
</dbReference>
<dbReference type="GO" id="GO:0009307">
    <property type="term" value="P:DNA restriction-modification system"/>
    <property type="evidence" value="ECO:0007669"/>
    <property type="project" value="UniProtKB-KW"/>
</dbReference>
<dbReference type="GO" id="GO:0032259">
    <property type="term" value="P:methylation"/>
    <property type="evidence" value="ECO:0007669"/>
    <property type="project" value="UniProtKB-KW"/>
</dbReference>
<dbReference type="CDD" id="cd02440">
    <property type="entry name" value="AdoMet_MTases"/>
    <property type="match status" value="1"/>
</dbReference>
<dbReference type="Gene3D" id="1.20.1260.30">
    <property type="match status" value="1"/>
</dbReference>
<dbReference type="Gene3D" id="3.40.50.150">
    <property type="entry name" value="Vaccinia Virus protein VP39"/>
    <property type="match status" value="1"/>
</dbReference>
<dbReference type="InterPro" id="IPR051537">
    <property type="entry name" value="DNA_Adenine_Mtase"/>
</dbReference>
<dbReference type="InterPro" id="IPR003356">
    <property type="entry name" value="DNA_methylase_A-5"/>
</dbReference>
<dbReference type="InterPro" id="IPR029063">
    <property type="entry name" value="SAM-dependent_MTases_sf"/>
</dbReference>
<dbReference type="InterPro" id="IPR038333">
    <property type="entry name" value="T1MK-like_N_sf"/>
</dbReference>
<dbReference type="PANTHER" id="PTHR42933">
    <property type="entry name" value="SLR6095 PROTEIN"/>
    <property type="match status" value="1"/>
</dbReference>
<dbReference type="PANTHER" id="PTHR42933:SF3">
    <property type="entry name" value="TYPE I RESTRICTION ENZYME MJAVIII METHYLASE SUBUNIT"/>
    <property type="match status" value="1"/>
</dbReference>
<dbReference type="Pfam" id="PF02384">
    <property type="entry name" value="N6_Mtase"/>
    <property type="match status" value="1"/>
</dbReference>
<dbReference type="PRINTS" id="PR00507">
    <property type="entry name" value="N12N6MTFRASE"/>
</dbReference>
<dbReference type="SUPFAM" id="SSF53335">
    <property type="entry name" value="S-adenosyl-L-methionine-dependent methyltransferases"/>
    <property type="match status" value="1"/>
</dbReference>
<keyword id="KW-0238">DNA-binding</keyword>
<keyword id="KW-0489">Methyltransferase</keyword>
<keyword id="KW-1185">Reference proteome</keyword>
<keyword id="KW-0680">Restriction system</keyword>
<keyword id="KW-0949">S-adenosyl-L-methionine</keyword>
<keyword id="KW-0808">Transferase</keyword>
<comment type="function">
    <text evidence="1 3">The subtype gamma methyltransferase (M) subunit of a type I restriction enzyme. The M and S subunits together form a methyltransferase (MTase) that methylates A-3 on the top and bottom strands of the sequence 5'-CAAN(7)TGG-3'. In the presence of the R subunit the complex can also act as an endonuclease, binding to the same target sequence but cutting the DNA some distance from this site. Whether the DNA is cut or modified depends on the methylation state of the target sequence. When the target site is unmodified, the DNA is cut. When the target site is hemimethylated, the complex acts as a maintenance MTase modifying the DNA so that both strands become methylated. After locating a non-methylated recognition site, the enzyme complex serves as a molecular motor that translocates DNA in an ATP-dependent manner until a collision occurs that triggers cleavage.</text>
</comment>
<comment type="catalytic activity">
    <reaction evidence="1">
        <text>a 2'-deoxyadenosine in DNA + S-adenosyl-L-methionine = an N(6)-methyl-2'-deoxyadenosine in DNA + S-adenosyl-L-homocysteine + H(+)</text>
        <dbReference type="Rhea" id="RHEA:15197"/>
        <dbReference type="Rhea" id="RHEA-COMP:12418"/>
        <dbReference type="Rhea" id="RHEA-COMP:12419"/>
        <dbReference type="ChEBI" id="CHEBI:15378"/>
        <dbReference type="ChEBI" id="CHEBI:57856"/>
        <dbReference type="ChEBI" id="CHEBI:59789"/>
        <dbReference type="ChEBI" id="CHEBI:90615"/>
        <dbReference type="ChEBI" id="CHEBI:90616"/>
        <dbReference type="EC" id="2.1.1.72"/>
    </reaction>
</comment>
<comment type="subunit">
    <text evidence="1">The type I restriction/modification system is composed of three polypeptides R, M and S.</text>
</comment>
<comment type="miscellaneous">
    <text evidence="1">Type I restriction and modification enzymes are complex, multifunctional systems which require ATP, S-adenosyl methionine and Mg(2+) as cofactors and, in addition to their endonucleolytic and methylase activities, are potent DNA-dependent ATPases.</text>
</comment>
<comment type="similarity">
    <text evidence="4">Belongs to the N4/N6-methyltransferase family.</text>
</comment>
<comment type="sequence caution" evidence="4">
    <conflict type="frameshift">
        <sequence resource="EMBL-CDS" id="AAB98113"/>
    </conflict>
</comment>
<accession>Q57596</accession>